<keyword id="KW-0002">3D-structure</keyword>
<keyword id="KW-0156">Chromatin regulator</keyword>
<keyword id="KW-0233">DNA recombination</keyword>
<keyword id="KW-0479">Metal-binding</keyword>
<keyword id="KW-0539">Nucleus</keyword>
<keyword id="KW-1185">Reference proteome</keyword>
<keyword id="KW-0862">Zinc</keyword>
<keyword id="KW-0863">Zinc-finger</keyword>
<sequence>MSLQMVTVGHNIALIQPGFSLMNFDGQVFFFGQKGWPKRSCPTGVFHFDIKQNHLKLKPAIFSKDSCYLPPLRYPATCSYKGSIDSDKHQYIIHGGKTPNNELSDKIYIMSVACKNNKKVTFRCTEKDLVGDVPEPRYGHSIDVVYSRGKSMGVLFGGRSYMPSTQRTTEKWNSVADCLPHVFLIDFEFGCATSYILPELQDGLSFHVSIARNDTVYILGGHSLASNIRPANLYRIRVDLPLGTPAVNCTVLPGGISVSSAILTQTNNDEFVIVGGYQLENQKRMVCSLVSLGDNTIEISEMETPDWTSDIKHSKIWFGSNMGNGTIFLGIPGDNKQAMSEAFYFYTLRCSEEDLSEDQKIVSNSQTSTEDPGDSTPFEDSEEFCFSAEATSFDGDDEFDTYNEDDEDDESVTGYWITCCPTCDVDINTWVPFYSTELNKPAMIYCSHGDGHWVHAQCMDLEERTLIHLSEGSNKYYCNEHVQIARALQTPKRNPPLQKPPMKSLHKKGSGKVLTPAKKSFLRRLFD</sequence>
<dbReference type="EMBL" id="M64796">
    <property type="protein sequence ID" value="AAB82302.1"/>
    <property type="molecule type" value="mRNA"/>
</dbReference>
<dbReference type="CCDS" id="CCDS16462.1"/>
<dbReference type="PIR" id="A34852">
    <property type="entry name" value="A34852"/>
</dbReference>
<dbReference type="RefSeq" id="NP_033046.1">
    <property type="nucleotide sequence ID" value="NM_009020.4"/>
</dbReference>
<dbReference type="RefSeq" id="XP_017172095.1">
    <property type="nucleotide sequence ID" value="XM_017316606.3"/>
</dbReference>
<dbReference type="PDB" id="2JWO">
    <property type="method" value="NMR"/>
    <property type="chains" value="A=414-487"/>
</dbReference>
<dbReference type="PDB" id="2V83">
    <property type="method" value="X-ray"/>
    <property type="resolution" value="2.40 A"/>
    <property type="chains" value="A/B/C=414-487"/>
</dbReference>
<dbReference type="PDB" id="2V85">
    <property type="method" value="X-ray"/>
    <property type="resolution" value="2.00 A"/>
    <property type="chains" value="A/B=414-487"/>
</dbReference>
<dbReference type="PDB" id="2V86">
    <property type="method" value="X-ray"/>
    <property type="resolution" value="2.05 A"/>
    <property type="chains" value="A/B=414-487"/>
</dbReference>
<dbReference type="PDB" id="2V87">
    <property type="method" value="X-ray"/>
    <property type="resolution" value="1.80 A"/>
    <property type="chains" value="A/B=414-487"/>
</dbReference>
<dbReference type="PDB" id="2V88">
    <property type="method" value="X-ray"/>
    <property type="resolution" value="2.00 A"/>
    <property type="chains" value="A/B=414-487"/>
</dbReference>
<dbReference type="PDB" id="2V89">
    <property type="method" value="X-ray"/>
    <property type="resolution" value="1.10 A"/>
    <property type="chains" value="A/B=414-487"/>
</dbReference>
<dbReference type="PDB" id="4WWX">
    <property type="method" value="X-ray"/>
    <property type="resolution" value="3.20 A"/>
    <property type="chains" value="X/Y=2-350"/>
</dbReference>
<dbReference type="PDB" id="5ZDZ">
    <property type="method" value="X-ray"/>
    <property type="resolution" value="2.80 A"/>
    <property type="chains" value="B/D=1-387"/>
</dbReference>
<dbReference type="PDB" id="5ZE0">
    <property type="method" value="X-ray"/>
    <property type="resolution" value="2.75 A"/>
    <property type="chains" value="B/D=1-387"/>
</dbReference>
<dbReference type="PDB" id="5ZE1">
    <property type="method" value="X-ray"/>
    <property type="resolution" value="3.00 A"/>
    <property type="chains" value="B/D=1-387"/>
</dbReference>
<dbReference type="PDB" id="5ZE2">
    <property type="method" value="X-ray"/>
    <property type="resolution" value="3.30 A"/>
    <property type="chains" value="B/D=1-387"/>
</dbReference>
<dbReference type="PDB" id="6CG0">
    <property type="method" value="EM"/>
    <property type="resolution" value="3.17 A"/>
    <property type="chains" value="B/D=1-520"/>
</dbReference>
<dbReference type="PDB" id="6CIJ">
    <property type="method" value="EM"/>
    <property type="resolution" value="3.90 A"/>
    <property type="chains" value="B/D=1-520"/>
</dbReference>
<dbReference type="PDB" id="6CIK">
    <property type="method" value="X-ray"/>
    <property type="resolution" value="3.15 A"/>
    <property type="chains" value="B/D=1-359"/>
</dbReference>
<dbReference type="PDB" id="6CIL">
    <property type="method" value="X-ray"/>
    <property type="resolution" value="4.15 A"/>
    <property type="chains" value="B/D=1-359"/>
</dbReference>
<dbReference type="PDB" id="6CIM">
    <property type="method" value="X-ray"/>
    <property type="resolution" value="3.60 A"/>
    <property type="chains" value="B/D=1-359"/>
</dbReference>
<dbReference type="PDB" id="6OEM">
    <property type="method" value="EM"/>
    <property type="resolution" value="3.60 A"/>
    <property type="chains" value="B/D=1-527"/>
</dbReference>
<dbReference type="PDB" id="6OEN">
    <property type="method" value="EM"/>
    <property type="resolution" value="4.30 A"/>
    <property type="chains" value="B/D=1-527"/>
</dbReference>
<dbReference type="PDB" id="6OEO">
    <property type="method" value="EM"/>
    <property type="resolution" value="3.69 A"/>
    <property type="chains" value="B/D=1-527"/>
</dbReference>
<dbReference type="PDB" id="6OEP">
    <property type="method" value="EM"/>
    <property type="resolution" value="3.70 A"/>
    <property type="chains" value="B/D=1-527"/>
</dbReference>
<dbReference type="PDB" id="6OEQ">
    <property type="method" value="EM"/>
    <property type="resolution" value="4.30 A"/>
    <property type="chains" value="B/D=1-527"/>
</dbReference>
<dbReference type="PDB" id="6OER">
    <property type="method" value="EM"/>
    <property type="resolution" value="3.29 A"/>
    <property type="chains" value="B/D=1-527"/>
</dbReference>
<dbReference type="PDB" id="6OES">
    <property type="method" value="EM"/>
    <property type="resolution" value="3.06 A"/>
    <property type="chains" value="B/D=1-527"/>
</dbReference>
<dbReference type="PDB" id="6OET">
    <property type="method" value="EM"/>
    <property type="resolution" value="3.40 A"/>
    <property type="chains" value="B/D=1-527"/>
</dbReference>
<dbReference type="PDB" id="6V0V">
    <property type="method" value="EM"/>
    <property type="resolution" value="3.61 A"/>
    <property type="chains" value="B=1-520"/>
</dbReference>
<dbReference type="PDB" id="6XNX">
    <property type="method" value="EM"/>
    <property type="resolution" value="2.70 A"/>
    <property type="chains" value="B/D=3-361"/>
</dbReference>
<dbReference type="PDB" id="6XNY">
    <property type="method" value="EM"/>
    <property type="resolution" value="2.90 A"/>
    <property type="chains" value="B/D=3-361"/>
</dbReference>
<dbReference type="PDB" id="6XNZ">
    <property type="method" value="EM"/>
    <property type="resolution" value="3.80 A"/>
    <property type="chains" value="B/D=3-361"/>
</dbReference>
<dbReference type="PDBsum" id="2JWO"/>
<dbReference type="PDBsum" id="2V83"/>
<dbReference type="PDBsum" id="2V85"/>
<dbReference type="PDBsum" id="2V86"/>
<dbReference type="PDBsum" id="2V87"/>
<dbReference type="PDBsum" id="2V88"/>
<dbReference type="PDBsum" id="2V89"/>
<dbReference type="PDBsum" id="4WWX"/>
<dbReference type="PDBsum" id="5ZDZ"/>
<dbReference type="PDBsum" id="5ZE0"/>
<dbReference type="PDBsum" id="5ZE1"/>
<dbReference type="PDBsum" id="5ZE2"/>
<dbReference type="PDBsum" id="6CG0"/>
<dbReference type="PDBsum" id="6CIJ"/>
<dbReference type="PDBsum" id="6CIK"/>
<dbReference type="PDBsum" id="6CIL"/>
<dbReference type="PDBsum" id="6CIM"/>
<dbReference type="PDBsum" id="6OEM"/>
<dbReference type="PDBsum" id="6OEN"/>
<dbReference type="PDBsum" id="6OEO"/>
<dbReference type="PDBsum" id="6OEP"/>
<dbReference type="PDBsum" id="6OEQ"/>
<dbReference type="PDBsum" id="6OER"/>
<dbReference type="PDBsum" id="6OES"/>
<dbReference type="PDBsum" id="6OET"/>
<dbReference type="PDBsum" id="6V0V"/>
<dbReference type="PDBsum" id="6XNX"/>
<dbReference type="PDBsum" id="6XNY"/>
<dbReference type="PDBsum" id="6XNZ"/>
<dbReference type="EMDB" id="EMD-20030"/>
<dbReference type="EMDB" id="EMD-20031"/>
<dbReference type="EMDB" id="EMD-20032"/>
<dbReference type="EMDB" id="EMD-20033"/>
<dbReference type="EMDB" id="EMD-20034"/>
<dbReference type="EMDB" id="EMD-20035"/>
<dbReference type="EMDB" id="EMD-20036"/>
<dbReference type="EMDB" id="EMD-20037"/>
<dbReference type="EMDB" id="EMD-21003"/>
<dbReference type="EMDB" id="EMD-22272"/>
<dbReference type="EMDB" id="EMD-22273"/>
<dbReference type="EMDB" id="EMD-22274"/>
<dbReference type="EMDB" id="EMD-7470"/>
<dbReference type="EMDB" id="EMD-7480"/>
<dbReference type="SMR" id="P21784"/>
<dbReference type="BioGRID" id="202575">
    <property type="interactions" value="2"/>
</dbReference>
<dbReference type="CORUM" id="P21784"/>
<dbReference type="DIP" id="DIP-46179N"/>
<dbReference type="FunCoup" id="P21784">
    <property type="interactions" value="778"/>
</dbReference>
<dbReference type="IntAct" id="P21784">
    <property type="interactions" value="4"/>
</dbReference>
<dbReference type="MINT" id="P21784"/>
<dbReference type="STRING" id="10090.ENSMUSP00000038204"/>
<dbReference type="iPTMnet" id="P21784"/>
<dbReference type="PhosphoSitePlus" id="P21784"/>
<dbReference type="PaxDb" id="10090-ENSMUSP00000038204"/>
<dbReference type="ProteomicsDB" id="300390"/>
<dbReference type="Antibodypedia" id="26023">
    <property type="antibodies" value="269 antibodies from 33 providers"/>
</dbReference>
<dbReference type="DNASU" id="19374"/>
<dbReference type="Ensembl" id="ENSMUST00000044031.4">
    <property type="protein sequence ID" value="ENSMUSP00000038204.4"/>
    <property type="gene ID" value="ENSMUSG00000032864.5"/>
</dbReference>
<dbReference type="Ensembl" id="ENSMUST00000111227.2">
    <property type="protein sequence ID" value="ENSMUSP00000106858.2"/>
    <property type="gene ID" value="ENSMUSG00000032864.5"/>
</dbReference>
<dbReference type="GeneID" id="19374"/>
<dbReference type="KEGG" id="mmu:19374"/>
<dbReference type="UCSC" id="uc008lhj.1">
    <property type="organism name" value="mouse"/>
</dbReference>
<dbReference type="AGR" id="MGI:97849"/>
<dbReference type="CTD" id="5897"/>
<dbReference type="MGI" id="MGI:97849">
    <property type="gene designation" value="Rag2"/>
</dbReference>
<dbReference type="VEuPathDB" id="HostDB:ENSMUSG00000032864"/>
<dbReference type="eggNOG" id="ENOG502QVKU">
    <property type="taxonomic scope" value="Eukaryota"/>
</dbReference>
<dbReference type="GeneTree" id="ENSGT00390000012559"/>
<dbReference type="HOGENOM" id="CLU_516740_0_0_1"/>
<dbReference type="InParanoid" id="P21784"/>
<dbReference type="OMA" id="MIFCSRG"/>
<dbReference type="OrthoDB" id="8512570at2759"/>
<dbReference type="PhylomeDB" id="P21784"/>
<dbReference type="TreeFam" id="TF331236"/>
<dbReference type="BioGRID-ORCS" id="19374">
    <property type="hits" value="2 hits in 80 CRISPR screens"/>
</dbReference>
<dbReference type="EvolutionaryTrace" id="P21784"/>
<dbReference type="PRO" id="PR:P21784"/>
<dbReference type="Proteomes" id="UP000000589">
    <property type="component" value="Chromosome 2"/>
</dbReference>
<dbReference type="RNAct" id="P21784">
    <property type="molecule type" value="protein"/>
</dbReference>
<dbReference type="Bgee" id="ENSMUSG00000032864">
    <property type="expression patterns" value="Expressed in thymus and 23 other cell types or tissues"/>
</dbReference>
<dbReference type="ExpressionAtlas" id="P21784">
    <property type="expression patterns" value="baseline and differential"/>
</dbReference>
<dbReference type="GO" id="GO:0005654">
    <property type="term" value="C:nucleoplasm"/>
    <property type="evidence" value="ECO:0000304"/>
    <property type="project" value="Reactome"/>
</dbReference>
<dbReference type="GO" id="GO:0005634">
    <property type="term" value="C:nucleus"/>
    <property type="evidence" value="ECO:0000305"/>
    <property type="project" value="UniProtKB"/>
</dbReference>
<dbReference type="GO" id="GO:0003682">
    <property type="term" value="F:chromatin binding"/>
    <property type="evidence" value="ECO:0000314"/>
    <property type="project" value="UniProtKB"/>
</dbReference>
<dbReference type="GO" id="GO:0003677">
    <property type="term" value="F:DNA binding"/>
    <property type="evidence" value="ECO:0007669"/>
    <property type="project" value="InterPro"/>
</dbReference>
<dbReference type="GO" id="GO:0140002">
    <property type="term" value="F:histone H3K4me3 reader activity"/>
    <property type="evidence" value="ECO:0000314"/>
    <property type="project" value="UniProtKB"/>
</dbReference>
<dbReference type="GO" id="GO:0035091">
    <property type="term" value="F:phosphatidylinositol binding"/>
    <property type="evidence" value="ECO:0000314"/>
    <property type="project" value="UniProtKB"/>
</dbReference>
<dbReference type="GO" id="GO:0005547">
    <property type="term" value="F:phosphatidylinositol-3,4,5-trisphosphate binding"/>
    <property type="evidence" value="ECO:0000314"/>
    <property type="project" value="UniProtKB"/>
</dbReference>
<dbReference type="GO" id="GO:0043325">
    <property type="term" value="F:phosphatidylinositol-3,4-bisphosphate binding"/>
    <property type="evidence" value="ECO:0000314"/>
    <property type="project" value="UniProtKB"/>
</dbReference>
<dbReference type="GO" id="GO:0080025">
    <property type="term" value="F:phosphatidylinositol-3,5-bisphosphate binding"/>
    <property type="evidence" value="ECO:0000314"/>
    <property type="project" value="UniProtKB"/>
</dbReference>
<dbReference type="GO" id="GO:0005546">
    <property type="term" value="F:phosphatidylinositol-4,5-bisphosphate binding"/>
    <property type="evidence" value="ECO:0000314"/>
    <property type="project" value="UniProtKB"/>
</dbReference>
<dbReference type="GO" id="GO:0008270">
    <property type="term" value="F:zinc ion binding"/>
    <property type="evidence" value="ECO:0000314"/>
    <property type="project" value="UniProtKB"/>
</dbReference>
<dbReference type="GO" id="GO:0030183">
    <property type="term" value="P:B cell differentiation"/>
    <property type="evidence" value="ECO:0000315"/>
    <property type="project" value="UniProtKB"/>
</dbReference>
<dbReference type="GO" id="GO:0002358">
    <property type="term" value="P:B cell homeostatic proliferation"/>
    <property type="evidence" value="ECO:0000315"/>
    <property type="project" value="MGI"/>
</dbReference>
<dbReference type="GO" id="GO:0002326">
    <property type="term" value="P:B cell lineage commitment"/>
    <property type="evidence" value="ECO:0000315"/>
    <property type="project" value="MGI"/>
</dbReference>
<dbReference type="GO" id="GO:0042742">
    <property type="term" value="P:defense response to bacterium"/>
    <property type="evidence" value="ECO:0000316"/>
    <property type="project" value="MGI"/>
</dbReference>
<dbReference type="GO" id="GO:1904155">
    <property type="term" value="P:DN2 thymocyte differentiation"/>
    <property type="evidence" value="ECO:0000315"/>
    <property type="project" value="MGI"/>
</dbReference>
<dbReference type="GO" id="GO:0006310">
    <property type="term" value="P:DNA recombination"/>
    <property type="evidence" value="ECO:0000304"/>
    <property type="project" value="MGI"/>
</dbReference>
<dbReference type="GO" id="GO:0002313">
    <property type="term" value="P:mature B cell differentiation involved in immune response"/>
    <property type="evidence" value="ECO:0007669"/>
    <property type="project" value="Ensembl"/>
</dbReference>
<dbReference type="GO" id="GO:0033085">
    <property type="term" value="P:negative regulation of T cell differentiation in thymus"/>
    <property type="evidence" value="ECO:0007669"/>
    <property type="project" value="Ensembl"/>
</dbReference>
<dbReference type="GO" id="GO:0035265">
    <property type="term" value="P:organ growth"/>
    <property type="evidence" value="ECO:0000315"/>
    <property type="project" value="MGI"/>
</dbReference>
<dbReference type="GO" id="GO:0046622">
    <property type="term" value="P:positive regulation of organ growth"/>
    <property type="evidence" value="ECO:0000315"/>
    <property type="project" value="MGI"/>
</dbReference>
<dbReference type="GO" id="GO:0002331">
    <property type="term" value="P:pre-B cell allelic exclusion"/>
    <property type="evidence" value="ECO:0000315"/>
    <property type="project" value="UniProtKB"/>
</dbReference>
<dbReference type="GO" id="GO:0030217">
    <property type="term" value="P:T cell differentiation"/>
    <property type="evidence" value="ECO:0000315"/>
    <property type="project" value="MGI"/>
</dbReference>
<dbReference type="GO" id="GO:0033077">
    <property type="term" value="P:T cell differentiation in thymus"/>
    <property type="evidence" value="ECO:0000315"/>
    <property type="project" value="UniProtKB"/>
</dbReference>
<dbReference type="GO" id="GO:0002360">
    <property type="term" value="P:T cell lineage commitment"/>
    <property type="evidence" value="ECO:0000315"/>
    <property type="project" value="MGI"/>
</dbReference>
<dbReference type="GO" id="GO:0033151">
    <property type="term" value="P:V(D)J recombination"/>
    <property type="evidence" value="ECO:0000315"/>
    <property type="project" value="UniProtKB"/>
</dbReference>
<dbReference type="CDD" id="cd15569">
    <property type="entry name" value="PHD_RAG2"/>
    <property type="match status" value="1"/>
</dbReference>
<dbReference type="FunFam" id="2.120.10.80:FF:000047">
    <property type="entry name" value="V(D)J recombination-activating protein 2"/>
    <property type="match status" value="1"/>
</dbReference>
<dbReference type="FunFam" id="3.30.160.290:FF:000001">
    <property type="entry name" value="V(D)J recombination-activating protein 2"/>
    <property type="match status" value="1"/>
</dbReference>
<dbReference type="Gene3D" id="2.120.10.80">
    <property type="entry name" value="Kelch-type beta propeller"/>
    <property type="match status" value="1"/>
</dbReference>
<dbReference type="Gene3D" id="3.30.160.290">
    <property type="entry name" value="Rag2 PHD finger"/>
    <property type="match status" value="1"/>
</dbReference>
<dbReference type="InterPro" id="IPR011043">
    <property type="entry name" value="Gal_Oxase/kelch_b-propeller"/>
</dbReference>
<dbReference type="InterPro" id="IPR015915">
    <property type="entry name" value="Kelch-typ_b-propeller"/>
</dbReference>
<dbReference type="InterPro" id="IPR004321">
    <property type="entry name" value="RAG2"/>
</dbReference>
<dbReference type="InterPro" id="IPR025162">
    <property type="entry name" value="RAG2_PHD"/>
</dbReference>
<dbReference type="InterPro" id="IPR011011">
    <property type="entry name" value="Znf_FYVE_PHD"/>
</dbReference>
<dbReference type="PANTHER" id="PTHR10960">
    <property type="entry name" value="V D J RECOMBINATION-ACTIVATING PROTEIN 2"/>
    <property type="match status" value="1"/>
</dbReference>
<dbReference type="PANTHER" id="PTHR10960:SF0">
    <property type="entry name" value="V(D)J RECOMBINATION-ACTIVATING PROTEIN 2"/>
    <property type="match status" value="1"/>
</dbReference>
<dbReference type="Pfam" id="PF03089">
    <property type="entry name" value="RAG2"/>
    <property type="match status" value="1"/>
</dbReference>
<dbReference type="Pfam" id="PF13341">
    <property type="entry name" value="RAG2_PHD"/>
    <property type="match status" value="1"/>
</dbReference>
<dbReference type="SUPFAM" id="SSF57903">
    <property type="entry name" value="FYVE/PHD zinc finger"/>
    <property type="match status" value="1"/>
</dbReference>
<dbReference type="SUPFAM" id="SSF50965">
    <property type="entry name" value="Galactose oxidase, central domain"/>
    <property type="match status" value="1"/>
</dbReference>
<name>RAG2_MOUSE</name>
<evidence type="ECO:0000256" key="1">
    <source>
        <dbReference type="SAM" id="MobiDB-lite"/>
    </source>
</evidence>
<evidence type="ECO:0000269" key="2">
    <source>
    </source>
</evidence>
<evidence type="ECO:0000269" key="3">
    <source>
    </source>
</evidence>
<evidence type="ECO:0000269" key="4">
    <source>
    </source>
</evidence>
<evidence type="ECO:0000269" key="5">
    <source>
    </source>
</evidence>
<evidence type="ECO:0000269" key="6">
    <source>
    </source>
</evidence>
<evidence type="ECO:0000269" key="7">
    <source>
    </source>
</evidence>
<evidence type="ECO:0000269" key="8">
    <source>
    </source>
</evidence>
<evidence type="ECO:0000269" key="9">
    <source>
    </source>
</evidence>
<evidence type="ECO:0000269" key="10">
    <source>
    </source>
</evidence>
<evidence type="ECO:0000269" key="11">
    <source>
    </source>
</evidence>
<evidence type="ECO:0000269" key="12">
    <source>
    </source>
</evidence>
<evidence type="ECO:0000269" key="13">
    <source>
    </source>
</evidence>
<evidence type="ECO:0000269" key="14">
    <source>
    </source>
</evidence>
<evidence type="ECO:0000305" key="15"/>
<evidence type="ECO:0007829" key="16">
    <source>
        <dbReference type="PDB" id="2JWO"/>
    </source>
</evidence>
<evidence type="ECO:0007829" key="17">
    <source>
        <dbReference type="PDB" id="2V89"/>
    </source>
</evidence>
<evidence type="ECO:0007829" key="18">
    <source>
        <dbReference type="PDB" id="4WWX"/>
    </source>
</evidence>
<evidence type="ECO:0007829" key="19">
    <source>
        <dbReference type="PDB" id="5ZE0"/>
    </source>
</evidence>
<evidence type="ECO:0007829" key="20">
    <source>
        <dbReference type="PDB" id="6CG0"/>
    </source>
</evidence>
<evidence type="ECO:0007829" key="21">
    <source>
        <dbReference type="PDB" id="6OER"/>
    </source>
</evidence>
<evidence type="ECO:0007829" key="22">
    <source>
        <dbReference type="PDB" id="6XNX"/>
    </source>
</evidence>
<evidence type="ECO:0007829" key="23">
    <source>
        <dbReference type="PDB" id="6XNY"/>
    </source>
</evidence>
<organism>
    <name type="scientific">Mus musculus</name>
    <name type="common">Mouse</name>
    <dbReference type="NCBI Taxonomy" id="10090"/>
    <lineage>
        <taxon>Eukaryota</taxon>
        <taxon>Metazoa</taxon>
        <taxon>Chordata</taxon>
        <taxon>Craniata</taxon>
        <taxon>Vertebrata</taxon>
        <taxon>Euteleostomi</taxon>
        <taxon>Mammalia</taxon>
        <taxon>Eutheria</taxon>
        <taxon>Euarchontoglires</taxon>
        <taxon>Glires</taxon>
        <taxon>Rodentia</taxon>
        <taxon>Myomorpha</taxon>
        <taxon>Muroidea</taxon>
        <taxon>Muridae</taxon>
        <taxon>Murinae</taxon>
        <taxon>Mus</taxon>
        <taxon>Mus</taxon>
    </lineage>
</organism>
<comment type="function">
    <text evidence="5 9 10 11 12 13">Core component of the RAG complex, a multiprotein complex that mediates the DNA cleavage phase during V(D)J recombination. V(D)J recombination assembles a diverse repertoire of immunoglobulin and T-cell receptor genes in developing B and T-lymphocytes through rearrangement of different V (variable), in some cases D (diversity), and J (joining) gene segments. DNA cleavage by the RAG complex occurs in 2 steps: a first nick is introduced in the top strand immediately upstream of the heptamer, generating a 3'-hydroxyl group that can attack the phosphodiester bond on the opposite strand in a direct transesterification reaction, thereby creating 4 DNA ends: 2 hairpin coding ends and 2 blunt, 5'-phosphorylated ends. The chromatin structure plays an essential role in the V(D)J recombination reactions and the presence of histone H3 trimethylated at 'Lys-4' (H3K4me3) stimulates both the nicking and haipinning steps. The RAG complex also plays a role in pre-B cell allelic exclusion, a process leading to expression of a single immunoglobulin heavy chain allele to enforce clonality and monospecific recognition by the B-cell antigen receptor (BCR) expressed on individual B-lymphocytes. The introduction of DNA breaks by the RAG complex on one immunoglobulin allele induces ATM-dependent repositioning of the other allele to pericentromeric heterochromatin, preventing accessibility to the RAG complex and recombination of the second allele. In the RAG complex, RAG2 is not the catalytic component but is required for all known catalytic activities mediated by RAG1. It probably acts as a sensor of chromatin state that recruits the RAG complex to H3K4me3.</text>
</comment>
<comment type="subunit">
    <text evidence="4 6 13 14">Component of the RAG complex composed of core components RAG1 and RAG2, and associated component HMGB1 or HMGB2.</text>
</comment>
<comment type="interaction">
    <interactant intactId="EBI-7602123">
        <id>P21784</id>
    </interactant>
    <interactant intactId="EBI-7602168">
        <id>P15919</id>
        <label>Rag1</label>
    </interactant>
    <organismsDiffer>false</organismsDiffer>
    <experiments>4</experiments>
</comment>
<comment type="subcellular location">
    <subcellularLocation>
        <location>Nucleus</location>
    </subcellularLocation>
</comment>
<comment type="tissue specificity">
    <text>Maturing lymphoid cells.</text>
</comment>
<comment type="domain">
    <text evidence="6 7">The atypical PHD-type zinc finger recognizes and binds histone H3 trimethylated on 'Lys-4' (H3K4me3). The presence Tyr-445 instead of a carboxylate in classical PHD-type zinc fingers results in an enhanced binding to H3K4me3 in presence of dimethylated on 'Arg-2' (H3R2me2) rather than inhibited. The atypical PHD-type zinc finger also binds various phosphoinositides, such as phosphatidylinositol 3,4-bisphosphate binding (PtdIns(3,4)P2), phosphatidylinositol 3,5-bisphosphate binding (PtdIns(3,5)P2), phosphatidylinositol 4,5-bisphosphate (PtdIns(4,5)P2) and phosphatidylinositol 3,4,5-trisphosphate binding (PtdIns(3,4,5)P3).</text>
</comment>
<comment type="disruption phenotype">
    <text evidence="3 8">Mice are viable but fail to produce mature B or T-lymphocytes. Very immature lymphoid cells are present in primary lymphoid organs. These cells do not rearrange their immunoglobulin or T-cell receptor loci. Double knockout with TREX1 does not show a visible phenotype.</text>
</comment>
<comment type="similarity">
    <text evidence="15">Belongs to the RAG2 family.</text>
</comment>
<accession>P21784</accession>
<gene>
    <name type="primary">Rag2</name>
    <name type="synonym">Rag-2</name>
</gene>
<protein>
    <recommendedName>
        <fullName>V(D)J recombination-activating protein 2</fullName>
        <shortName>RAG-2</shortName>
    </recommendedName>
</protein>
<reference key="1">
    <citation type="journal article" date="1990" name="Science">
        <title>RAG-1 and RAG-2, adjacent genes that synergistically activate V(D)J recombination.</title>
        <authorList>
            <person name="Oettinger M.A."/>
            <person name="Schatz D.G."/>
            <person name="Gorka C."/>
            <person name="Baltimore D."/>
        </authorList>
    </citation>
    <scope>NUCLEOTIDE SEQUENCE [MRNA]</scope>
    <scope>FUNCTION</scope>
</reference>
<reference key="2">
    <citation type="submission" date="1997-11" db="EMBL/GenBank/DDBJ databases">
        <authorList>
            <person name="Oettinger M.A."/>
            <person name="Schatz D.G."/>
            <person name="Gorka C."/>
            <person name="Baltimore D."/>
        </authorList>
    </citation>
    <scope>SEQUENCE REVISION TO 458</scope>
</reference>
<reference key="3">
    <citation type="journal article" date="1992" name="Cell">
        <title>RAG-2-deficient mice lack mature lymphocytes owing to inability to initiate V(D)J rearrangement.</title>
        <authorList>
            <person name="Shinkai Y."/>
            <person name="Rathbun G."/>
            <person name="Lam K.P."/>
            <person name="Oltz E.M."/>
            <person name="Stewart V."/>
            <person name="Mendelsohn M."/>
            <person name="Charron J."/>
            <person name="Datta M."/>
            <person name="Young F."/>
            <person name="Stall A.M."/>
            <person name="Alt F.W."/>
        </authorList>
    </citation>
    <scope>DISRUPTION PHENOTYPE</scope>
</reference>
<reference key="4">
    <citation type="journal article" date="1995" name="Cell">
        <title>Cleavage at a V(D)J recombination signal requires only RAG1 and RAG2 proteins and occurs in two steps.</title>
        <authorList>
            <person name="McBlane J.F."/>
            <person name="van Gent D.C."/>
            <person name="Ramsden D.A."/>
            <person name="Romeo C."/>
            <person name="Cuomo C.A."/>
            <person name="Gellert M."/>
            <person name="Oettinger M.A."/>
        </authorList>
    </citation>
    <scope>FUNCTION</scope>
    <scope>INTERACTION WITH RAG1</scope>
</reference>
<reference key="5">
    <citation type="journal article" date="1997" name="Cell">
        <title>RAG1 and RAG2 form a stable postcleavage synaptic complex with DNA containing signal ends in V(D)J recombination.</title>
        <authorList>
            <person name="Agrawal A."/>
            <person name="Schatz D.G."/>
        </authorList>
    </citation>
    <scope>FUNCTION</scope>
    <scope>IDENTIFICATION IN THE RAG COMPLEX</scope>
</reference>
<reference key="6">
    <citation type="journal article" date="1997" name="EMBO J.">
        <title>Stimulation of V(D)J cleavage by high mobility group proteins.</title>
        <authorList>
            <person name="van Gent D.C."/>
            <person name="Hiom K."/>
            <person name="Paull T.T."/>
            <person name="Gellert M."/>
        </authorList>
    </citation>
    <scope>IDENTIFICATION IN THE RAG COMPLEX</scope>
</reference>
<reference key="7">
    <citation type="journal article" date="1999" name="Genes Dev.">
        <title>Mutational analysis of RAG1 and RAG2 identifies three catalytic amino acids in RAG1 critical for both cleavage steps of V(D)J recombination.</title>
        <authorList>
            <person name="Landree M.A."/>
            <person name="Wibbenmeyer J.A."/>
            <person name="Roth D.B."/>
        </authorList>
    </citation>
    <scope>MUTAGENESIS OF ASP-128; GLU-199; ASP-202; GLU-280; ASP-310; ASP-358 AND ASP-374</scope>
</reference>
<reference key="8">
    <citation type="journal article" date="2005" name="Immunity">
        <title>A direct interaction between the RAG2 C terminus and the core histones is required for efficient V(D)J recombination.</title>
        <authorList>
            <person name="West K.L."/>
            <person name="Singha N.C."/>
            <person name="De Ioannes P."/>
            <person name="Lacomis L."/>
            <person name="Erdjument-Bromage H."/>
            <person name="Tempst P."/>
            <person name="Cortes P."/>
        </authorList>
    </citation>
    <scope>FUNCTION</scope>
    <scope>HISTONE-BINDING</scope>
    <scope>MUTAGENESIS OF TYR-402; ASN-403; ASP-406 AND GLU-407</scope>
</reference>
<reference key="9">
    <citation type="journal article" date="2007" name="Nature">
        <title>RAG2 PHD finger couples histone H3 lysine 4 trimethylation with V(D)J recombination.</title>
        <authorList>
            <person name="Matthews A.G."/>
            <person name="Kuo A.J."/>
            <person name="Ramon-Maiques S."/>
            <person name="Han S."/>
            <person name="Champagne K.S."/>
            <person name="Ivanov D."/>
            <person name="Gallardo M."/>
            <person name="Carney D."/>
            <person name="Cheung P."/>
            <person name="Ciccone D.N."/>
            <person name="Walter K.L."/>
            <person name="Utz P.J."/>
            <person name="Shi Y."/>
            <person name="Kutateladze T.G."/>
            <person name="Yang W."/>
            <person name="Gozani O."/>
            <person name="Oettinger M.A."/>
        </authorList>
    </citation>
    <scope>DOMAIN PHD-TYPE ZINC-FINGER</scope>
    <scope>ZINC-BINDING</scope>
    <scope>HISTONE-BINDING</scope>
    <scope>MUTAGENESIS OF TYR-415; MET-443 AND TRP-453</scope>
</reference>
<reference key="10">
    <citation type="journal article" date="2008" name="Cell">
        <title>Trex1 prevents cell-intrinsic initiation of autoimmunity.</title>
        <authorList>
            <person name="Stetson D.B."/>
            <person name="Ko J.S."/>
            <person name="Heidmann T."/>
            <person name="Medzhitov R."/>
        </authorList>
    </citation>
    <scope>DISRUPTION PHENOTYPE</scope>
</reference>
<reference key="11">
    <citation type="journal article" date="2009" name="Mol. Cell">
        <title>H3K4me3 stimulates the V(D)J RAG complex for both nicking and hairpinning in trans in addition to tethering in cis: implications for translocations.</title>
        <authorList>
            <person name="Shimazaki N."/>
            <person name="Tsai A.G."/>
            <person name="Lieber M.R."/>
        </authorList>
    </citation>
    <scope>FUNCTION</scope>
    <scope>MUTAGENESIS OF TRP-453</scope>
</reference>
<reference key="12">
    <citation type="journal article" date="2009" name="Nat. Immunol.">
        <title>RAG-1 and ATM coordinate monoallelic recombination and nuclear positioning of immunoglobulin loci.</title>
        <authorList>
            <person name="Hewitt S.L."/>
            <person name="Yin B."/>
            <person name="Ji Y."/>
            <person name="Chaumeil J."/>
            <person name="Marszalek K."/>
            <person name="Tenthorey J."/>
            <person name="Salvagiotto G."/>
            <person name="Steinel N."/>
            <person name="Ramsey L.B."/>
            <person name="Ghysdael J."/>
            <person name="Farrar M.A."/>
            <person name="Sleckman B.P."/>
            <person name="Schatz D.G."/>
            <person name="Busslinger M."/>
            <person name="Bassing C.H."/>
            <person name="Skok J.A."/>
        </authorList>
    </citation>
    <scope>FUNCTION</scope>
</reference>
<reference key="13">
    <citation type="journal article" date="2009" name="Nat. Struct. Mol. Biol.">
        <title>Structure of the RAG1 nonamer binding domain with DNA reveals a dimer that mediates DNA synapsis.</title>
        <authorList>
            <person name="Yin F.F."/>
            <person name="Bailey S."/>
            <person name="Innis C.A."/>
            <person name="Ciubotaru M."/>
            <person name="Kamtekar S."/>
            <person name="Steitz T.A."/>
            <person name="Schatz D.G."/>
        </authorList>
    </citation>
    <scope>INTERACTION WITH RAG1</scope>
</reference>
<reference key="14">
    <citation type="journal article" date="2005" name="J. Biol. Chem.">
        <title>A PHD finger motif in the C terminus of RAG2 modulates recombination activity.</title>
        <authorList>
            <person name="Elkin S.K."/>
            <person name="Ivanov D."/>
            <person name="Ewalt M."/>
            <person name="Ferguson C.G."/>
            <person name="Hyberts S.G."/>
            <person name="Sun Z.Y."/>
            <person name="Prestwich G.D."/>
            <person name="Yuan J."/>
            <person name="Wagner G."/>
            <person name="Oettinger M.A."/>
            <person name="Gozani O.P."/>
        </authorList>
    </citation>
    <scope>STRUCTURE BY NMR OF 414-487 IN COMPLEX WITH ZINC</scope>
    <scope>ZINC-BINDING</scope>
    <scope>PHOSPHOINOSITIDE-BINDING</scope>
    <scope>MUTAGENESIS OF LYS-440; ARG-464 AND HIS-468</scope>
</reference>
<reference key="15">
    <citation type="journal article" date="2007" name="Proc. Natl. Acad. Sci. U.S.A.">
        <title>The plant homeodomain finger of RAG2 recognizes histone H3 methylated at both lysine-4 and arginine-2.</title>
        <authorList>
            <person name="Ramon-Maiques S."/>
            <person name="Kuo A.J."/>
            <person name="Carney D."/>
            <person name="Matthews A.G."/>
            <person name="Oettinger M.A."/>
            <person name="Gozani O."/>
            <person name="Yang W."/>
        </authorList>
    </citation>
    <scope>X-RAY CRYSTALLOGRAPHY (2.4 ANGSTROMS) OF 414-487 IN COMPLEX WITH ZINC AND H3 PEPTIDE</scope>
    <scope>DOMAIN PHD-TYPE ZINC-FINGER</scope>
    <scope>ZINC-BINDING</scope>
    <scope>HISTONE-BINDING</scope>
    <scope>MUTAGENESIS OF TYR-445</scope>
</reference>
<proteinExistence type="evidence at protein level"/>
<feature type="chain" id="PRO_0000167138" description="V(D)J recombination-activating protein 2">
    <location>
        <begin position="1"/>
        <end position="527"/>
    </location>
</feature>
<feature type="zinc finger region" description="PHD-type; atypical">
    <location>
        <begin position="416"/>
        <end position="484"/>
    </location>
</feature>
<feature type="region of interest" description="Disordered" evidence="1">
    <location>
        <begin position="359"/>
        <end position="380"/>
    </location>
</feature>
<feature type="region of interest" description="Disordered" evidence="1">
    <location>
        <begin position="490"/>
        <end position="511"/>
    </location>
</feature>
<feature type="compositionally biased region" description="Polar residues" evidence="1">
    <location>
        <begin position="361"/>
        <end position="370"/>
    </location>
</feature>
<feature type="compositionally biased region" description="Acidic residues" evidence="1">
    <location>
        <begin position="371"/>
        <end position="380"/>
    </location>
</feature>
<feature type="binding site" evidence="4 6">
    <location>
        <position position="419"/>
    </location>
    <ligand>
        <name>Zn(2+)</name>
        <dbReference type="ChEBI" id="CHEBI:29105"/>
        <label>1</label>
    </ligand>
</feature>
<feature type="binding site" evidence="4 6">
    <location>
        <position position="423"/>
    </location>
    <ligand>
        <name>Zn(2+)</name>
        <dbReference type="ChEBI" id="CHEBI:29105"/>
        <label>1</label>
    </ligand>
</feature>
<feature type="binding site" evidence="4 6">
    <location>
        <position position="446"/>
    </location>
    <ligand>
        <name>Zn(2+)</name>
        <dbReference type="ChEBI" id="CHEBI:29105"/>
        <label>2</label>
    </ligand>
</feature>
<feature type="binding site" evidence="4 6">
    <location>
        <position position="452"/>
    </location>
    <ligand>
        <name>Zn(2+)</name>
        <dbReference type="ChEBI" id="CHEBI:29105"/>
        <label>2</label>
    </ligand>
</feature>
<feature type="binding site" evidence="4 6">
    <location>
        <position position="455"/>
    </location>
    <ligand>
        <name>Zn(2+)</name>
        <dbReference type="ChEBI" id="CHEBI:29105"/>
        <label>1</label>
    </ligand>
</feature>
<feature type="binding site" evidence="4 6">
    <location>
        <position position="458"/>
    </location>
    <ligand>
        <name>Zn(2+)</name>
        <dbReference type="ChEBI" id="CHEBI:29105"/>
        <label>1</label>
    </ligand>
</feature>
<feature type="binding site" evidence="4 6">
    <location>
        <position position="478"/>
    </location>
    <ligand>
        <name>Zn(2+)</name>
        <dbReference type="ChEBI" id="CHEBI:29105"/>
        <label>2</label>
    </ligand>
</feature>
<feature type="binding site" evidence="4 6">
    <location>
        <position position="481"/>
    </location>
    <ligand>
        <name>Zn(2+)</name>
        <dbReference type="ChEBI" id="CHEBI:29105"/>
        <label>2</label>
    </ligand>
</feature>
<feature type="mutagenesis site" description="Does not affect the endonuclease activity of the RAG complex." evidence="2">
    <original>D</original>
    <variation>N</variation>
    <location>
        <position position="128"/>
    </location>
</feature>
<feature type="mutagenesis site" description="Does not affect the endonuclease activity of the RAG complex." evidence="2">
    <original>E</original>
    <variation>Q</variation>
    <location>
        <position position="199"/>
    </location>
</feature>
<feature type="mutagenesis site" description="Does not affect the endonuclease activity of the RAG complex." evidence="2">
    <original>D</original>
    <variation>N</variation>
    <location>
        <position position="202"/>
    </location>
</feature>
<feature type="mutagenesis site" description="Does not affect the endonuclease activity of the RAG complex." evidence="2">
    <original>E</original>
    <variation>Q</variation>
    <location>
        <position position="280"/>
    </location>
</feature>
<feature type="mutagenesis site" description="Does not affect the endonuclease activity of the RAG complex." evidence="2">
    <original>D</original>
    <variation>N</variation>
    <location>
        <position position="310"/>
    </location>
</feature>
<feature type="mutagenesis site" description="Does not affect the endonuclease activity of the RAG complex." evidence="2">
    <original>D</original>
    <variation>N</variation>
    <location>
        <position position="358"/>
    </location>
</feature>
<feature type="mutagenesis site" description="Does not affect the endonuclease activity of the RAG complex." evidence="2">
    <original>D</original>
    <variation>N</variation>
    <location>
        <position position="374"/>
    </location>
</feature>
<feature type="mutagenesis site" description="Reduced interaction with histones." evidence="5">
    <original>Y</original>
    <variation>A</variation>
    <location>
        <position position="402"/>
    </location>
</feature>
<feature type="mutagenesis site" description="Reduced interaction with histones." evidence="5">
    <original>N</original>
    <variation>A</variation>
    <location>
        <position position="403"/>
    </location>
</feature>
<feature type="mutagenesis site" description="Reduced interaction with histones." evidence="5">
    <original>D</original>
    <variation>A</variation>
    <location>
        <position position="406"/>
    </location>
</feature>
<feature type="mutagenesis site" description="Reduced interaction with histones." evidence="5">
    <original>E</original>
    <variation>A</variation>
    <location>
        <position position="407"/>
    </location>
</feature>
<feature type="mutagenesis site" description="Induces a slight reduction in V(D)J recombination without affecting interaction with histones.">
    <original>D</original>
    <variation>A</variation>
    <location>
        <position position="408"/>
    </location>
</feature>
<feature type="mutagenesis site" description="Abolishes binding to H3K4me3 without affecting phosphoinositide-binding." evidence="7">
    <original>Y</original>
    <variation>A</variation>
    <location>
        <position position="415"/>
    </location>
</feature>
<feature type="mutagenesis site" description="Binds PtdIns(4,5)P2 at wild-type level." evidence="4">
    <original>K</original>
    <variation>A</variation>
    <location>
        <position position="440"/>
    </location>
</feature>
<feature type="mutagenesis site" description="Abolishes binding to H3K4me3 without affecting phosphoinositide-binding." evidence="7">
    <original>M</original>
    <variation>A</variation>
    <location>
        <position position="443"/>
    </location>
</feature>
<feature type="mutagenesis site" description="Still binds H3K4me3 and H3R2me2 but with reduced affinity." evidence="6">
    <original>Y</original>
    <variation>A</variation>
    <variation>D</variation>
    <location>
        <position position="445"/>
    </location>
</feature>
<feature type="mutagenesis site" description="Abolishes binding to H3K4me3 without affecting phosphoinositide-binding. Impairs enzymatic activity of the RAG complex." evidence="7 10">
    <original>W</original>
    <variation>R</variation>
    <location>
        <position position="453"/>
    </location>
</feature>
<feature type="mutagenesis site" description="Leads to a strong reduction in PtdIns(4,5)P2-binding." evidence="4">
    <original>R</original>
    <variation>A</variation>
    <location>
        <position position="464"/>
    </location>
</feature>
<feature type="mutagenesis site" description="Leads to a strong reduction in PtdIns(4,5)P2-binding." evidence="4">
    <original>H</original>
    <variation>A</variation>
    <location>
        <position position="468"/>
    </location>
</feature>
<feature type="strand" evidence="22">
    <location>
        <begin position="5"/>
        <end position="8"/>
    </location>
</feature>
<feature type="helix" evidence="22">
    <location>
        <begin position="12"/>
        <end position="14"/>
    </location>
</feature>
<feature type="strand" evidence="22">
    <location>
        <begin position="21"/>
        <end position="24"/>
    </location>
</feature>
<feature type="strand" evidence="22">
    <location>
        <begin position="27"/>
        <end position="30"/>
    </location>
</feature>
<feature type="strand" evidence="22">
    <location>
        <begin position="33"/>
        <end position="36"/>
    </location>
</feature>
<feature type="strand" evidence="21">
    <location>
        <begin position="39"/>
        <end position="44"/>
    </location>
</feature>
<feature type="strand" evidence="22">
    <location>
        <begin position="46"/>
        <end position="51"/>
    </location>
</feature>
<feature type="strand" evidence="22">
    <location>
        <begin position="54"/>
        <end position="59"/>
    </location>
</feature>
<feature type="strand" evidence="20">
    <location>
        <begin position="73"/>
        <end position="75"/>
    </location>
</feature>
<feature type="strand" evidence="22">
    <location>
        <begin position="76"/>
        <end position="80"/>
    </location>
</feature>
<feature type="strand" evidence="22">
    <location>
        <begin position="90"/>
        <end position="94"/>
    </location>
</feature>
<feature type="turn" evidence="21">
    <location>
        <begin position="99"/>
        <end position="101"/>
    </location>
</feature>
<feature type="strand" evidence="22">
    <location>
        <begin position="106"/>
        <end position="110"/>
    </location>
</feature>
<feature type="helix" evidence="19">
    <location>
        <begin position="116"/>
        <end position="118"/>
    </location>
</feature>
<feature type="strand" evidence="20">
    <location>
        <begin position="119"/>
        <end position="122"/>
    </location>
</feature>
<feature type="strand" evidence="22">
    <location>
        <begin position="124"/>
        <end position="127"/>
    </location>
</feature>
<feature type="strand" evidence="22">
    <location>
        <begin position="130"/>
        <end position="132"/>
    </location>
</feature>
<feature type="strand" evidence="19">
    <location>
        <begin position="141"/>
        <end position="146"/>
    </location>
</feature>
<feature type="strand" evidence="18">
    <location>
        <begin position="148"/>
        <end position="150"/>
    </location>
</feature>
<feature type="strand" evidence="22">
    <location>
        <begin position="152"/>
        <end position="156"/>
    </location>
</feature>
<feature type="strand" evidence="22">
    <location>
        <begin position="159"/>
        <end position="161"/>
    </location>
</feature>
<feature type="turn" evidence="22">
    <location>
        <begin position="164"/>
        <end position="166"/>
    </location>
</feature>
<feature type="helix" evidence="22">
    <location>
        <begin position="169"/>
        <end position="171"/>
    </location>
</feature>
<feature type="strand" evidence="22">
    <location>
        <begin position="175"/>
        <end position="177"/>
    </location>
</feature>
<feature type="strand" evidence="22">
    <location>
        <begin position="181"/>
        <end position="186"/>
    </location>
</feature>
<feature type="turn" evidence="22">
    <location>
        <begin position="187"/>
        <end position="190"/>
    </location>
</feature>
<feature type="strand" evidence="22">
    <location>
        <begin position="191"/>
        <end position="193"/>
    </location>
</feature>
<feature type="strand" evidence="22">
    <location>
        <begin position="208"/>
        <end position="212"/>
    </location>
</feature>
<feature type="strand" evidence="22">
    <location>
        <begin position="215"/>
        <end position="219"/>
    </location>
</feature>
<feature type="turn" evidence="22">
    <location>
        <begin position="224"/>
        <end position="227"/>
    </location>
</feature>
<feature type="strand" evidence="22">
    <location>
        <begin position="235"/>
        <end position="239"/>
    </location>
</feature>
<feature type="strand" evidence="22">
    <location>
        <begin position="241"/>
        <end position="244"/>
    </location>
</feature>
<feature type="strand" evidence="22">
    <location>
        <begin position="246"/>
        <end position="248"/>
    </location>
</feature>
<feature type="strand" evidence="23">
    <location>
        <begin position="251"/>
        <end position="253"/>
    </location>
</feature>
<feature type="strand" evidence="22">
    <location>
        <begin position="262"/>
        <end position="264"/>
    </location>
</feature>
<feature type="strand" evidence="22">
    <location>
        <begin position="270"/>
        <end position="274"/>
    </location>
</feature>
<feature type="strand" evidence="19">
    <location>
        <begin position="277"/>
        <end position="279"/>
    </location>
</feature>
<feature type="strand" evidence="22">
    <location>
        <begin position="280"/>
        <end position="283"/>
    </location>
</feature>
<feature type="strand" evidence="22">
    <location>
        <begin position="288"/>
        <end position="293"/>
    </location>
</feature>
<feature type="strand" evidence="22">
    <location>
        <begin position="296"/>
        <end position="299"/>
    </location>
</feature>
<feature type="helix" evidence="22">
    <location>
        <begin position="309"/>
        <end position="312"/>
    </location>
</feature>
<feature type="strand" evidence="22">
    <location>
        <begin position="318"/>
        <end position="321"/>
    </location>
</feature>
<feature type="strand" evidence="22">
    <location>
        <begin position="323"/>
        <end position="325"/>
    </location>
</feature>
<feature type="strand" evidence="22">
    <location>
        <begin position="327"/>
        <end position="332"/>
    </location>
</feature>
<feature type="strand" evidence="23">
    <location>
        <begin position="336"/>
        <end position="340"/>
    </location>
</feature>
<feature type="strand" evidence="22">
    <location>
        <begin position="342"/>
        <end position="349"/>
    </location>
</feature>
<feature type="strand" evidence="17">
    <location>
        <begin position="414"/>
        <end position="417"/>
    </location>
</feature>
<feature type="turn" evidence="17">
    <location>
        <begin position="427"/>
        <end position="429"/>
    </location>
</feature>
<feature type="strand" evidence="16">
    <location>
        <begin position="434"/>
        <end position="436"/>
    </location>
</feature>
<feature type="strand" evidence="17">
    <location>
        <begin position="438"/>
        <end position="440"/>
    </location>
</feature>
<feature type="strand" evidence="17">
    <location>
        <begin position="443"/>
        <end position="446"/>
    </location>
</feature>
<feature type="strand" evidence="16">
    <location>
        <begin position="448"/>
        <end position="450"/>
    </location>
</feature>
<feature type="strand" evidence="17">
    <location>
        <begin position="452"/>
        <end position="455"/>
    </location>
</feature>
<feature type="helix" evidence="17">
    <location>
        <begin position="457"/>
        <end position="459"/>
    </location>
</feature>
<feature type="helix" evidence="17">
    <location>
        <begin position="463"/>
        <end position="471"/>
    </location>
</feature>
<feature type="turn" evidence="17">
    <location>
        <begin position="479"/>
        <end position="483"/>
    </location>
</feature>